<gene>
    <name evidence="1" type="primary">glmU</name>
    <name type="ordered locus">Sfri_4043</name>
</gene>
<sequence length="454" mass="48112">MSLNVVILAAGKGTRMRSDLPKVLHPIAHKSMVQHVIDTANSLGSSAIQLVYGYGADKLQAALGEQALNWVLQAEQLGTGHAVAQANPNINDDDTVLILYGDVPLIQQSTLEALLAVRPTNGLAILTVNLPNPTGYGRIVREQGKVVGIIEQKDANAEQLAINEVNTGIMAVPGKQLKAWLNRLSNNNAQGEYYLTDIIAMANVDGVEITTSQPQSAIEVEGANNRVQLAQLERAYQARAAEKMMLEGANLRDPARIDIRGDVSVGMDVMIDVNVIFQGKVTLGNNVTIGAGAILIDCDIADNAEIKPYTIVEGAKLGQAASAGPFARLRPGAELKEDAHIGNFVEIKKSVLGKGSKAGHLAYLGDAQIGAGVNIGAGTITCNYDGANKFITTIEDGVFVGSDTQLVAPVTIGKNATLGAGSTITKDVAENELVITRVKQRHITGWQRPIKIKK</sequence>
<proteinExistence type="inferred from homology"/>
<feature type="chain" id="PRO_0000263154" description="Bifunctional protein GlmU">
    <location>
        <begin position="1"/>
        <end position="454"/>
    </location>
</feature>
<feature type="region of interest" description="Pyrophosphorylase" evidence="1">
    <location>
        <begin position="1"/>
        <end position="226"/>
    </location>
</feature>
<feature type="region of interest" description="Linker" evidence="1">
    <location>
        <begin position="227"/>
        <end position="247"/>
    </location>
</feature>
<feature type="region of interest" description="N-acetyltransferase" evidence="1">
    <location>
        <begin position="248"/>
        <end position="454"/>
    </location>
</feature>
<feature type="active site" description="Proton acceptor" evidence="1">
    <location>
        <position position="360"/>
    </location>
</feature>
<feature type="binding site" evidence="1">
    <location>
        <begin position="8"/>
        <end position="11"/>
    </location>
    <ligand>
        <name>UDP-N-acetyl-alpha-D-glucosamine</name>
        <dbReference type="ChEBI" id="CHEBI:57705"/>
    </ligand>
</feature>
<feature type="binding site" evidence="1">
    <location>
        <position position="22"/>
    </location>
    <ligand>
        <name>UDP-N-acetyl-alpha-D-glucosamine</name>
        <dbReference type="ChEBI" id="CHEBI:57705"/>
    </ligand>
</feature>
<feature type="binding site" evidence="1">
    <location>
        <position position="73"/>
    </location>
    <ligand>
        <name>UDP-N-acetyl-alpha-D-glucosamine</name>
        <dbReference type="ChEBI" id="CHEBI:57705"/>
    </ligand>
</feature>
<feature type="binding site" evidence="1">
    <location>
        <begin position="78"/>
        <end position="79"/>
    </location>
    <ligand>
        <name>UDP-N-acetyl-alpha-D-glucosamine</name>
        <dbReference type="ChEBI" id="CHEBI:57705"/>
    </ligand>
</feature>
<feature type="binding site" evidence="1">
    <location>
        <begin position="100"/>
        <end position="102"/>
    </location>
    <ligand>
        <name>UDP-N-acetyl-alpha-D-glucosamine</name>
        <dbReference type="ChEBI" id="CHEBI:57705"/>
    </ligand>
</feature>
<feature type="binding site" evidence="1">
    <location>
        <position position="102"/>
    </location>
    <ligand>
        <name>Mg(2+)</name>
        <dbReference type="ChEBI" id="CHEBI:18420"/>
    </ligand>
</feature>
<feature type="binding site" evidence="1">
    <location>
        <position position="137"/>
    </location>
    <ligand>
        <name>UDP-N-acetyl-alpha-D-glucosamine</name>
        <dbReference type="ChEBI" id="CHEBI:57705"/>
    </ligand>
</feature>
<feature type="binding site" evidence="1">
    <location>
        <position position="151"/>
    </location>
    <ligand>
        <name>UDP-N-acetyl-alpha-D-glucosamine</name>
        <dbReference type="ChEBI" id="CHEBI:57705"/>
    </ligand>
</feature>
<feature type="binding site" evidence="1">
    <location>
        <position position="166"/>
    </location>
    <ligand>
        <name>UDP-N-acetyl-alpha-D-glucosamine</name>
        <dbReference type="ChEBI" id="CHEBI:57705"/>
    </ligand>
</feature>
<feature type="binding site" evidence="1">
    <location>
        <position position="224"/>
    </location>
    <ligand>
        <name>Mg(2+)</name>
        <dbReference type="ChEBI" id="CHEBI:18420"/>
    </ligand>
</feature>
<feature type="binding site" evidence="1">
    <location>
        <position position="224"/>
    </location>
    <ligand>
        <name>UDP-N-acetyl-alpha-D-glucosamine</name>
        <dbReference type="ChEBI" id="CHEBI:57705"/>
    </ligand>
</feature>
<feature type="binding site" evidence="1">
    <location>
        <position position="330"/>
    </location>
    <ligand>
        <name>UDP-N-acetyl-alpha-D-glucosamine</name>
        <dbReference type="ChEBI" id="CHEBI:57705"/>
    </ligand>
</feature>
<feature type="binding site" evidence="1">
    <location>
        <position position="348"/>
    </location>
    <ligand>
        <name>UDP-N-acetyl-alpha-D-glucosamine</name>
        <dbReference type="ChEBI" id="CHEBI:57705"/>
    </ligand>
</feature>
<feature type="binding site" evidence="1">
    <location>
        <position position="363"/>
    </location>
    <ligand>
        <name>UDP-N-acetyl-alpha-D-glucosamine</name>
        <dbReference type="ChEBI" id="CHEBI:57705"/>
    </ligand>
</feature>
<feature type="binding site" evidence="1">
    <location>
        <position position="374"/>
    </location>
    <ligand>
        <name>UDP-N-acetyl-alpha-D-glucosamine</name>
        <dbReference type="ChEBI" id="CHEBI:57705"/>
    </ligand>
</feature>
<feature type="binding site" evidence="1">
    <location>
        <position position="377"/>
    </location>
    <ligand>
        <name>acetyl-CoA</name>
        <dbReference type="ChEBI" id="CHEBI:57288"/>
    </ligand>
</feature>
<feature type="binding site" evidence="1">
    <location>
        <begin position="383"/>
        <end position="384"/>
    </location>
    <ligand>
        <name>acetyl-CoA</name>
        <dbReference type="ChEBI" id="CHEBI:57288"/>
    </ligand>
</feature>
<feature type="binding site" evidence="1">
    <location>
        <position position="402"/>
    </location>
    <ligand>
        <name>acetyl-CoA</name>
        <dbReference type="ChEBI" id="CHEBI:57288"/>
    </ligand>
</feature>
<feature type="binding site" evidence="1">
    <location>
        <position position="420"/>
    </location>
    <ligand>
        <name>acetyl-CoA</name>
        <dbReference type="ChEBI" id="CHEBI:57288"/>
    </ligand>
</feature>
<feature type="binding site" evidence="1">
    <location>
        <position position="437"/>
    </location>
    <ligand>
        <name>acetyl-CoA</name>
        <dbReference type="ChEBI" id="CHEBI:57288"/>
    </ligand>
</feature>
<reference key="1">
    <citation type="submission" date="2006-08" db="EMBL/GenBank/DDBJ databases">
        <title>Complete sequence of Shewanella frigidimarina NCIMB 400.</title>
        <authorList>
            <consortium name="US DOE Joint Genome Institute"/>
            <person name="Copeland A."/>
            <person name="Lucas S."/>
            <person name="Lapidus A."/>
            <person name="Barry K."/>
            <person name="Detter J.C."/>
            <person name="Glavina del Rio T."/>
            <person name="Hammon N."/>
            <person name="Israni S."/>
            <person name="Dalin E."/>
            <person name="Tice H."/>
            <person name="Pitluck S."/>
            <person name="Fredrickson J.K."/>
            <person name="Kolker E."/>
            <person name="McCuel L.A."/>
            <person name="DiChristina T."/>
            <person name="Nealson K.H."/>
            <person name="Newman D."/>
            <person name="Tiedje J.M."/>
            <person name="Zhou J."/>
            <person name="Romine M.F."/>
            <person name="Culley D.E."/>
            <person name="Serres M."/>
            <person name="Chertkov O."/>
            <person name="Brettin T."/>
            <person name="Bruce D."/>
            <person name="Han C."/>
            <person name="Tapia R."/>
            <person name="Gilna P."/>
            <person name="Schmutz J."/>
            <person name="Larimer F."/>
            <person name="Land M."/>
            <person name="Hauser L."/>
            <person name="Kyrpides N."/>
            <person name="Mikhailova N."/>
            <person name="Richardson P."/>
        </authorList>
    </citation>
    <scope>NUCLEOTIDE SEQUENCE [LARGE SCALE GENOMIC DNA]</scope>
    <source>
        <strain>NCIMB 400</strain>
    </source>
</reference>
<dbReference type="EC" id="2.7.7.23" evidence="1"/>
<dbReference type="EC" id="2.3.1.157" evidence="1"/>
<dbReference type="EMBL" id="CP000447">
    <property type="protein sequence ID" value="ABI73868.1"/>
    <property type="molecule type" value="Genomic_DNA"/>
</dbReference>
<dbReference type="RefSeq" id="WP_011639448.1">
    <property type="nucleotide sequence ID" value="NC_008345.1"/>
</dbReference>
<dbReference type="SMR" id="Q07VU6"/>
<dbReference type="STRING" id="318167.Sfri_4043"/>
<dbReference type="KEGG" id="sfr:Sfri_4043"/>
<dbReference type="eggNOG" id="COG1207">
    <property type="taxonomic scope" value="Bacteria"/>
</dbReference>
<dbReference type="HOGENOM" id="CLU_029499_15_2_6"/>
<dbReference type="OrthoDB" id="9775031at2"/>
<dbReference type="UniPathway" id="UPA00113">
    <property type="reaction ID" value="UER00532"/>
</dbReference>
<dbReference type="UniPathway" id="UPA00113">
    <property type="reaction ID" value="UER00533"/>
</dbReference>
<dbReference type="UniPathway" id="UPA00973"/>
<dbReference type="Proteomes" id="UP000000684">
    <property type="component" value="Chromosome"/>
</dbReference>
<dbReference type="GO" id="GO:0005737">
    <property type="term" value="C:cytoplasm"/>
    <property type="evidence" value="ECO:0007669"/>
    <property type="project" value="UniProtKB-SubCell"/>
</dbReference>
<dbReference type="GO" id="GO:0016020">
    <property type="term" value="C:membrane"/>
    <property type="evidence" value="ECO:0007669"/>
    <property type="project" value="GOC"/>
</dbReference>
<dbReference type="GO" id="GO:0019134">
    <property type="term" value="F:glucosamine-1-phosphate N-acetyltransferase activity"/>
    <property type="evidence" value="ECO:0007669"/>
    <property type="project" value="UniProtKB-UniRule"/>
</dbReference>
<dbReference type="GO" id="GO:0000287">
    <property type="term" value="F:magnesium ion binding"/>
    <property type="evidence" value="ECO:0007669"/>
    <property type="project" value="UniProtKB-UniRule"/>
</dbReference>
<dbReference type="GO" id="GO:0003977">
    <property type="term" value="F:UDP-N-acetylglucosamine diphosphorylase activity"/>
    <property type="evidence" value="ECO:0007669"/>
    <property type="project" value="UniProtKB-UniRule"/>
</dbReference>
<dbReference type="GO" id="GO:0000902">
    <property type="term" value="P:cell morphogenesis"/>
    <property type="evidence" value="ECO:0007669"/>
    <property type="project" value="UniProtKB-UniRule"/>
</dbReference>
<dbReference type="GO" id="GO:0071555">
    <property type="term" value="P:cell wall organization"/>
    <property type="evidence" value="ECO:0007669"/>
    <property type="project" value="UniProtKB-KW"/>
</dbReference>
<dbReference type="GO" id="GO:0009245">
    <property type="term" value="P:lipid A biosynthetic process"/>
    <property type="evidence" value="ECO:0007669"/>
    <property type="project" value="UniProtKB-UniRule"/>
</dbReference>
<dbReference type="GO" id="GO:0009252">
    <property type="term" value="P:peptidoglycan biosynthetic process"/>
    <property type="evidence" value="ECO:0007669"/>
    <property type="project" value="UniProtKB-UniRule"/>
</dbReference>
<dbReference type="GO" id="GO:0008360">
    <property type="term" value="P:regulation of cell shape"/>
    <property type="evidence" value="ECO:0007669"/>
    <property type="project" value="UniProtKB-KW"/>
</dbReference>
<dbReference type="GO" id="GO:0006048">
    <property type="term" value="P:UDP-N-acetylglucosamine biosynthetic process"/>
    <property type="evidence" value="ECO:0007669"/>
    <property type="project" value="UniProtKB-UniPathway"/>
</dbReference>
<dbReference type="CDD" id="cd02540">
    <property type="entry name" value="GT2_GlmU_N_bac"/>
    <property type="match status" value="1"/>
</dbReference>
<dbReference type="CDD" id="cd03353">
    <property type="entry name" value="LbH_GlmU_C"/>
    <property type="match status" value="1"/>
</dbReference>
<dbReference type="Gene3D" id="2.160.10.10">
    <property type="entry name" value="Hexapeptide repeat proteins"/>
    <property type="match status" value="1"/>
</dbReference>
<dbReference type="Gene3D" id="3.90.550.10">
    <property type="entry name" value="Spore Coat Polysaccharide Biosynthesis Protein SpsA, Chain A"/>
    <property type="match status" value="1"/>
</dbReference>
<dbReference type="HAMAP" id="MF_01631">
    <property type="entry name" value="GlmU"/>
    <property type="match status" value="1"/>
</dbReference>
<dbReference type="InterPro" id="IPR005882">
    <property type="entry name" value="Bifunctional_GlmU"/>
</dbReference>
<dbReference type="InterPro" id="IPR050065">
    <property type="entry name" value="GlmU-like"/>
</dbReference>
<dbReference type="InterPro" id="IPR038009">
    <property type="entry name" value="GlmU_C_LbH"/>
</dbReference>
<dbReference type="InterPro" id="IPR001451">
    <property type="entry name" value="Hexapep"/>
</dbReference>
<dbReference type="InterPro" id="IPR018357">
    <property type="entry name" value="Hexapep_transf_CS"/>
</dbReference>
<dbReference type="InterPro" id="IPR025877">
    <property type="entry name" value="MobA-like_NTP_Trfase"/>
</dbReference>
<dbReference type="InterPro" id="IPR029044">
    <property type="entry name" value="Nucleotide-diphossugar_trans"/>
</dbReference>
<dbReference type="InterPro" id="IPR011004">
    <property type="entry name" value="Trimer_LpxA-like_sf"/>
</dbReference>
<dbReference type="NCBIfam" id="TIGR01173">
    <property type="entry name" value="glmU"/>
    <property type="match status" value="1"/>
</dbReference>
<dbReference type="NCBIfam" id="NF006986">
    <property type="entry name" value="PRK09451.1"/>
    <property type="match status" value="1"/>
</dbReference>
<dbReference type="PANTHER" id="PTHR43584:SF3">
    <property type="entry name" value="BIFUNCTIONAL PROTEIN GLMU"/>
    <property type="match status" value="1"/>
</dbReference>
<dbReference type="PANTHER" id="PTHR43584">
    <property type="entry name" value="NUCLEOTIDYL TRANSFERASE"/>
    <property type="match status" value="1"/>
</dbReference>
<dbReference type="Pfam" id="PF00132">
    <property type="entry name" value="Hexapep"/>
    <property type="match status" value="1"/>
</dbReference>
<dbReference type="Pfam" id="PF12804">
    <property type="entry name" value="NTP_transf_3"/>
    <property type="match status" value="1"/>
</dbReference>
<dbReference type="SUPFAM" id="SSF53448">
    <property type="entry name" value="Nucleotide-diphospho-sugar transferases"/>
    <property type="match status" value="1"/>
</dbReference>
<dbReference type="SUPFAM" id="SSF51161">
    <property type="entry name" value="Trimeric LpxA-like enzymes"/>
    <property type="match status" value="1"/>
</dbReference>
<dbReference type="PROSITE" id="PS00101">
    <property type="entry name" value="HEXAPEP_TRANSFERASES"/>
    <property type="match status" value="1"/>
</dbReference>
<evidence type="ECO:0000255" key="1">
    <source>
        <dbReference type="HAMAP-Rule" id="MF_01631"/>
    </source>
</evidence>
<name>GLMU_SHEFN</name>
<comment type="function">
    <text evidence="1">Catalyzes the last two sequential reactions in the de novo biosynthetic pathway for UDP-N-acetylglucosamine (UDP-GlcNAc). The C-terminal domain catalyzes the transfer of acetyl group from acetyl coenzyme A to glucosamine-1-phosphate (GlcN-1-P) to produce N-acetylglucosamine-1-phosphate (GlcNAc-1-P), which is converted into UDP-GlcNAc by the transfer of uridine 5-monophosphate (from uridine 5-triphosphate), a reaction catalyzed by the N-terminal domain.</text>
</comment>
<comment type="catalytic activity">
    <reaction evidence="1">
        <text>alpha-D-glucosamine 1-phosphate + acetyl-CoA = N-acetyl-alpha-D-glucosamine 1-phosphate + CoA + H(+)</text>
        <dbReference type="Rhea" id="RHEA:13725"/>
        <dbReference type="ChEBI" id="CHEBI:15378"/>
        <dbReference type="ChEBI" id="CHEBI:57287"/>
        <dbReference type="ChEBI" id="CHEBI:57288"/>
        <dbReference type="ChEBI" id="CHEBI:57776"/>
        <dbReference type="ChEBI" id="CHEBI:58516"/>
        <dbReference type="EC" id="2.3.1.157"/>
    </reaction>
</comment>
<comment type="catalytic activity">
    <reaction evidence="1">
        <text>N-acetyl-alpha-D-glucosamine 1-phosphate + UTP + H(+) = UDP-N-acetyl-alpha-D-glucosamine + diphosphate</text>
        <dbReference type="Rhea" id="RHEA:13509"/>
        <dbReference type="ChEBI" id="CHEBI:15378"/>
        <dbReference type="ChEBI" id="CHEBI:33019"/>
        <dbReference type="ChEBI" id="CHEBI:46398"/>
        <dbReference type="ChEBI" id="CHEBI:57705"/>
        <dbReference type="ChEBI" id="CHEBI:57776"/>
        <dbReference type="EC" id="2.7.7.23"/>
    </reaction>
</comment>
<comment type="cofactor">
    <cofactor evidence="1">
        <name>Mg(2+)</name>
        <dbReference type="ChEBI" id="CHEBI:18420"/>
    </cofactor>
    <text evidence="1">Binds 1 Mg(2+) ion per subunit.</text>
</comment>
<comment type="pathway">
    <text evidence="1">Nucleotide-sugar biosynthesis; UDP-N-acetyl-alpha-D-glucosamine biosynthesis; N-acetyl-alpha-D-glucosamine 1-phosphate from alpha-D-glucosamine 6-phosphate (route II): step 2/2.</text>
</comment>
<comment type="pathway">
    <text evidence="1">Nucleotide-sugar biosynthesis; UDP-N-acetyl-alpha-D-glucosamine biosynthesis; UDP-N-acetyl-alpha-D-glucosamine from N-acetyl-alpha-D-glucosamine 1-phosphate: step 1/1.</text>
</comment>
<comment type="pathway">
    <text evidence="1">Bacterial outer membrane biogenesis; LPS lipid A biosynthesis.</text>
</comment>
<comment type="subunit">
    <text evidence="1">Homotrimer.</text>
</comment>
<comment type="subcellular location">
    <subcellularLocation>
        <location evidence="1">Cytoplasm</location>
    </subcellularLocation>
</comment>
<comment type="similarity">
    <text evidence="1">In the N-terminal section; belongs to the N-acetylglucosamine-1-phosphate uridyltransferase family.</text>
</comment>
<comment type="similarity">
    <text evidence="1">In the C-terminal section; belongs to the transferase hexapeptide repeat family.</text>
</comment>
<accession>Q07VU6</accession>
<keyword id="KW-0012">Acyltransferase</keyword>
<keyword id="KW-0133">Cell shape</keyword>
<keyword id="KW-0961">Cell wall biogenesis/degradation</keyword>
<keyword id="KW-0963">Cytoplasm</keyword>
<keyword id="KW-0460">Magnesium</keyword>
<keyword id="KW-0479">Metal-binding</keyword>
<keyword id="KW-0511">Multifunctional enzyme</keyword>
<keyword id="KW-0548">Nucleotidyltransferase</keyword>
<keyword id="KW-0573">Peptidoglycan synthesis</keyword>
<keyword id="KW-1185">Reference proteome</keyword>
<keyword id="KW-0677">Repeat</keyword>
<keyword id="KW-0808">Transferase</keyword>
<protein>
    <recommendedName>
        <fullName evidence="1">Bifunctional protein GlmU</fullName>
    </recommendedName>
    <domain>
        <recommendedName>
            <fullName evidence="1">UDP-N-acetylglucosamine pyrophosphorylase</fullName>
            <ecNumber evidence="1">2.7.7.23</ecNumber>
        </recommendedName>
        <alternativeName>
            <fullName evidence="1">N-acetylglucosamine-1-phosphate uridyltransferase</fullName>
        </alternativeName>
    </domain>
    <domain>
        <recommendedName>
            <fullName evidence="1">Glucosamine-1-phosphate N-acetyltransferase</fullName>
            <ecNumber evidence="1">2.3.1.157</ecNumber>
        </recommendedName>
    </domain>
</protein>
<organism>
    <name type="scientific">Shewanella frigidimarina (strain NCIMB 400)</name>
    <dbReference type="NCBI Taxonomy" id="318167"/>
    <lineage>
        <taxon>Bacteria</taxon>
        <taxon>Pseudomonadati</taxon>
        <taxon>Pseudomonadota</taxon>
        <taxon>Gammaproteobacteria</taxon>
        <taxon>Alteromonadales</taxon>
        <taxon>Shewanellaceae</taxon>
        <taxon>Shewanella</taxon>
    </lineage>
</organism>